<name>UXUA_SHOC1</name>
<comment type="function">
    <text evidence="1">Catalyzes the dehydration of D-mannonate.</text>
</comment>
<comment type="catalytic activity">
    <reaction evidence="1">
        <text>D-mannonate = 2-dehydro-3-deoxy-D-gluconate + H2O</text>
        <dbReference type="Rhea" id="RHEA:20097"/>
        <dbReference type="ChEBI" id="CHEBI:15377"/>
        <dbReference type="ChEBI" id="CHEBI:17767"/>
        <dbReference type="ChEBI" id="CHEBI:57990"/>
        <dbReference type="EC" id="4.2.1.8"/>
    </reaction>
</comment>
<comment type="cofactor">
    <cofactor evidence="1">
        <name>Fe(2+)</name>
        <dbReference type="ChEBI" id="CHEBI:29033"/>
    </cofactor>
    <cofactor evidence="1">
        <name>Mn(2+)</name>
        <dbReference type="ChEBI" id="CHEBI:29035"/>
    </cofactor>
</comment>
<comment type="pathway">
    <text evidence="1">Carbohydrate metabolism; pentose and glucuronate interconversion.</text>
</comment>
<comment type="similarity">
    <text evidence="1">Belongs to the mannonate dehydratase family.</text>
</comment>
<evidence type="ECO:0000255" key="1">
    <source>
        <dbReference type="HAMAP-Rule" id="MF_00106"/>
    </source>
</evidence>
<reference key="1">
    <citation type="submission" date="2003-10" db="EMBL/GenBank/DDBJ databases">
        <title>The complete genome sequence of the alkaliphilic Bacillus clausii KSM-K16.</title>
        <authorList>
            <person name="Takaki Y."/>
            <person name="Kageyama Y."/>
            <person name="Shimamura S."/>
            <person name="Suzuki H."/>
            <person name="Nishi S."/>
            <person name="Hatada Y."/>
            <person name="Kawai S."/>
            <person name="Ito S."/>
            <person name="Horikoshi K."/>
        </authorList>
    </citation>
    <scope>NUCLEOTIDE SEQUENCE [LARGE SCALE GENOMIC DNA]</scope>
    <source>
        <strain>KSM-K16</strain>
    </source>
</reference>
<organism>
    <name type="scientific">Shouchella clausii (strain KSM-K16)</name>
    <name type="common">Alkalihalobacillus clausii</name>
    <dbReference type="NCBI Taxonomy" id="66692"/>
    <lineage>
        <taxon>Bacteria</taxon>
        <taxon>Bacillati</taxon>
        <taxon>Bacillota</taxon>
        <taxon>Bacilli</taxon>
        <taxon>Bacillales</taxon>
        <taxon>Bacillaceae</taxon>
        <taxon>Shouchella</taxon>
    </lineage>
</organism>
<feature type="chain" id="PRO_0000170662" description="Mannonate dehydratase">
    <location>
        <begin position="1"/>
        <end position="358"/>
    </location>
</feature>
<sequence length="358" mass="41342">MRMTFRWYGENNDSVTLEQIKQIPGVEGLVWALHDKVAGEVWPLEDIMQVKEQADRYGFHLDVVESINVHEDIKLGLPTRDAYIENYKESIRNVAKVGAKVICYNFMPVFDWTRTDLFKEMEDGSTALFYEKAKVDNMDPRELVRQTTSNAAFTMPGWEPERLAHIEKSLKAYENVTEDDLWEHLQYFLEQVLPVAEEHGIQMAIHPDDPPWSVFGLPRIITSEAAVERFLQLSNSPAHGITLCSGSLGANPENDIPKIIRRFHDRIPFAHIRNVKIYENGDFIETSHRSQDGSVNIADVVKAYHENGFTGYVRPDHGRHIWNEKCRPGYGLYDRALGIMHLWGLWDAYELEAKRRQS</sequence>
<keyword id="KW-0408">Iron</keyword>
<keyword id="KW-0456">Lyase</keyword>
<keyword id="KW-0464">Manganese</keyword>
<keyword id="KW-1185">Reference proteome</keyword>
<proteinExistence type="inferred from homology"/>
<accession>Q5WKD5</accession>
<dbReference type="EC" id="4.2.1.8" evidence="1"/>
<dbReference type="EMBL" id="AP006627">
    <property type="protein sequence ID" value="BAD63170.1"/>
    <property type="molecule type" value="Genomic_DNA"/>
</dbReference>
<dbReference type="RefSeq" id="WP_011245486.1">
    <property type="nucleotide sequence ID" value="NC_006582.1"/>
</dbReference>
<dbReference type="SMR" id="Q5WKD5"/>
<dbReference type="STRING" id="66692.ABC0631"/>
<dbReference type="KEGG" id="bcl:ABC0631"/>
<dbReference type="eggNOG" id="COG1312">
    <property type="taxonomic scope" value="Bacteria"/>
</dbReference>
<dbReference type="HOGENOM" id="CLU_058621_1_0_9"/>
<dbReference type="OrthoDB" id="9780250at2"/>
<dbReference type="UniPathway" id="UPA00246"/>
<dbReference type="Proteomes" id="UP000001168">
    <property type="component" value="Chromosome"/>
</dbReference>
<dbReference type="GO" id="GO:0008198">
    <property type="term" value="F:ferrous iron binding"/>
    <property type="evidence" value="ECO:0007669"/>
    <property type="project" value="TreeGrafter"/>
</dbReference>
<dbReference type="GO" id="GO:0030145">
    <property type="term" value="F:manganese ion binding"/>
    <property type="evidence" value="ECO:0007669"/>
    <property type="project" value="TreeGrafter"/>
</dbReference>
<dbReference type="GO" id="GO:0008927">
    <property type="term" value="F:mannonate dehydratase activity"/>
    <property type="evidence" value="ECO:0007669"/>
    <property type="project" value="UniProtKB-UniRule"/>
</dbReference>
<dbReference type="GO" id="GO:0042840">
    <property type="term" value="P:D-glucuronate catabolic process"/>
    <property type="evidence" value="ECO:0007669"/>
    <property type="project" value="TreeGrafter"/>
</dbReference>
<dbReference type="Gene3D" id="3.20.20.150">
    <property type="entry name" value="Divalent-metal-dependent TIM barrel enzymes"/>
    <property type="match status" value="1"/>
</dbReference>
<dbReference type="HAMAP" id="MF_00106">
    <property type="entry name" value="UxuA"/>
    <property type="match status" value="1"/>
</dbReference>
<dbReference type="InterPro" id="IPR004628">
    <property type="entry name" value="Man_deHydtase"/>
</dbReference>
<dbReference type="InterPro" id="IPR036237">
    <property type="entry name" value="Xyl_isomerase-like_sf"/>
</dbReference>
<dbReference type="NCBIfam" id="NF003027">
    <property type="entry name" value="PRK03906.1"/>
    <property type="match status" value="2"/>
</dbReference>
<dbReference type="NCBIfam" id="TIGR00695">
    <property type="entry name" value="uxuA"/>
    <property type="match status" value="1"/>
</dbReference>
<dbReference type="PANTHER" id="PTHR30387">
    <property type="entry name" value="MANNONATE DEHYDRATASE"/>
    <property type="match status" value="1"/>
</dbReference>
<dbReference type="PANTHER" id="PTHR30387:SF2">
    <property type="entry name" value="MANNONATE DEHYDRATASE"/>
    <property type="match status" value="1"/>
</dbReference>
<dbReference type="Pfam" id="PF03786">
    <property type="entry name" value="UxuA"/>
    <property type="match status" value="1"/>
</dbReference>
<dbReference type="PIRSF" id="PIRSF016049">
    <property type="entry name" value="Man_dehyd"/>
    <property type="match status" value="1"/>
</dbReference>
<dbReference type="SUPFAM" id="SSF51658">
    <property type="entry name" value="Xylose isomerase-like"/>
    <property type="match status" value="1"/>
</dbReference>
<gene>
    <name evidence="1" type="primary">uxuA</name>
    <name type="ordered locus">ABC0631</name>
</gene>
<protein>
    <recommendedName>
        <fullName evidence="1">Mannonate dehydratase</fullName>
        <ecNumber evidence="1">4.2.1.8</ecNumber>
    </recommendedName>
    <alternativeName>
        <fullName evidence="1">D-mannonate hydro-lyase</fullName>
    </alternativeName>
</protein>